<organism>
    <name type="scientific">Actinobacillus pleuropneumoniae serotype 7 (strain AP76)</name>
    <dbReference type="NCBI Taxonomy" id="537457"/>
    <lineage>
        <taxon>Bacteria</taxon>
        <taxon>Pseudomonadati</taxon>
        <taxon>Pseudomonadota</taxon>
        <taxon>Gammaproteobacteria</taxon>
        <taxon>Pasteurellales</taxon>
        <taxon>Pasteurellaceae</taxon>
        <taxon>Actinobacillus</taxon>
    </lineage>
</organism>
<name>TSAC_ACTP7</name>
<reference key="1">
    <citation type="submission" date="2008-06" db="EMBL/GenBank/DDBJ databases">
        <title>Genome and proteome analysis of A. pleuropneumoniae serotype 7.</title>
        <authorList>
            <person name="Linke B."/>
            <person name="Buettner F."/>
            <person name="Martinez-Arias R."/>
            <person name="Goesmann A."/>
            <person name="Baltes N."/>
            <person name="Tegetmeyer H."/>
            <person name="Singh M."/>
            <person name="Gerlach G.F."/>
        </authorList>
    </citation>
    <scope>NUCLEOTIDE SEQUENCE [LARGE SCALE GENOMIC DNA]</scope>
    <source>
        <strain>AP76</strain>
    </source>
</reference>
<keyword id="KW-0067">ATP-binding</keyword>
<keyword id="KW-0963">Cytoplasm</keyword>
<keyword id="KW-0547">Nucleotide-binding</keyword>
<keyword id="KW-0548">Nucleotidyltransferase</keyword>
<keyword id="KW-0808">Transferase</keyword>
<keyword id="KW-0819">tRNA processing</keyword>
<sequence>MNNLENIVEQLKRNRVVAYPTEAVFGLGCNPNNESAVRALLKLKKRPEEKGLILIAPTKELLLPYIDENKLTAAHWQIFETPSERAITWVMPAKKAVPQYLTGQFDTIAVRLCCIPAVIDLCERTGFALTSTSCNLTGQEPCRTADEVKLQFGADFPVLEAETAGKTNPSEIRDIFTQHIFRQG</sequence>
<accession>B3GY27</accession>
<feature type="chain" id="PRO_0000352893" description="Threonylcarbamoyl-AMP synthase">
    <location>
        <begin position="1"/>
        <end position="184"/>
    </location>
</feature>
<feature type="domain" description="YrdC-like" evidence="1">
    <location>
        <begin position="1"/>
        <end position="184"/>
    </location>
</feature>
<evidence type="ECO:0000255" key="1">
    <source>
        <dbReference type="HAMAP-Rule" id="MF_01852"/>
    </source>
</evidence>
<evidence type="ECO:0000305" key="2"/>
<proteinExistence type="inferred from homology"/>
<comment type="function">
    <text evidence="1">Required for the formation of a threonylcarbamoyl group on adenosine at position 37 (t(6)A37) in tRNAs that read codons beginning with adenine. Catalyzes the conversion of L-threonine, HCO(3)(-)/CO(2) and ATP to give threonylcarbamoyl-AMP (TC-AMP) as the acyladenylate intermediate, with the release of diphosphate.</text>
</comment>
<comment type="catalytic activity">
    <reaction evidence="1">
        <text>L-threonine + hydrogencarbonate + ATP = L-threonylcarbamoyladenylate + diphosphate + H2O</text>
        <dbReference type="Rhea" id="RHEA:36407"/>
        <dbReference type="ChEBI" id="CHEBI:15377"/>
        <dbReference type="ChEBI" id="CHEBI:17544"/>
        <dbReference type="ChEBI" id="CHEBI:30616"/>
        <dbReference type="ChEBI" id="CHEBI:33019"/>
        <dbReference type="ChEBI" id="CHEBI:57926"/>
        <dbReference type="ChEBI" id="CHEBI:73682"/>
        <dbReference type="EC" id="2.7.7.87"/>
    </reaction>
</comment>
<comment type="subcellular location">
    <subcellularLocation>
        <location evidence="1">Cytoplasm</location>
    </subcellularLocation>
</comment>
<comment type="similarity">
    <text evidence="1">Belongs to the SUA5 family. TsaC subfamily.</text>
</comment>
<comment type="sequence caution" evidence="2">
    <conflict type="erroneous initiation">
        <sequence resource="EMBL-CDS" id="ACE61850"/>
    </conflict>
</comment>
<dbReference type="EC" id="2.7.7.87" evidence="1"/>
<dbReference type="EMBL" id="CP001091">
    <property type="protein sequence ID" value="ACE61850.1"/>
    <property type="status" value="ALT_INIT"/>
    <property type="molecule type" value="Genomic_DNA"/>
</dbReference>
<dbReference type="RefSeq" id="WP_005601623.1">
    <property type="nucleotide sequence ID" value="NC_010939.1"/>
</dbReference>
<dbReference type="SMR" id="B3GY27"/>
<dbReference type="GeneID" id="48599375"/>
<dbReference type="KEGG" id="apa:APP7_1198"/>
<dbReference type="HOGENOM" id="CLU_031397_6_0_6"/>
<dbReference type="Proteomes" id="UP000001226">
    <property type="component" value="Chromosome"/>
</dbReference>
<dbReference type="GO" id="GO:0005737">
    <property type="term" value="C:cytoplasm"/>
    <property type="evidence" value="ECO:0007669"/>
    <property type="project" value="UniProtKB-SubCell"/>
</dbReference>
<dbReference type="GO" id="GO:0005524">
    <property type="term" value="F:ATP binding"/>
    <property type="evidence" value="ECO:0007669"/>
    <property type="project" value="UniProtKB-UniRule"/>
</dbReference>
<dbReference type="GO" id="GO:0003725">
    <property type="term" value="F:double-stranded RNA binding"/>
    <property type="evidence" value="ECO:0007669"/>
    <property type="project" value="InterPro"/>
</dbReference>
<dbReference type="GO" id="GO:0061710">
    <property type="term" value="F:L-threonylcarbamoyladenylate synthase"/>
    <property type="evidence" value="ECO:0007669"/>
    <property type="project" value="UniProtKB-EC"/>
</dbReference>
<dbReference type="GO" id="GO:0000049">
    <property type="term" value="F:tRNA binding"/>
    <property type="evidence" value="ECO:0007669"/>
    <property type="project" value="TreeGrafter"/>
</dbReference>
<dbReference type="GO" id="GO:0006450">
    <property type="term" value="P:regulation of translational fidelity"/>
    <property type="evidence" value="ECO:0007669"/>
    <property type="project" value="TreeGrafter"/>
</dbReference>
<dbReference type="GO" id="GO:0002949">
    <property type="term" value="P:tRNA threonylcarbamoyladenosine modification"/>
    <property type="evidence" value="ECO:0007669"/>
    <property type="project" value="UniProtKB-UniRule"/>
</dbReference>
<dbReference type="FunFam" id="3.90.870.10:FF:000004">
    <property type="entry name" value="Threonylcarbamoyl-AMP synthase"/>
    <property type="match status" value="1"/>
</dbReference>
<dbReference type="Gene3D" id="3.90.870.10">
    <property type="entry name" value="DHBP synthase"/>
    <property type="match status" value="1"/>
</dbReference>
<dbReference type="HAMAP" id="MF_01852">
    <property type="entry name" value="TsaC"/>
    <property type="match status" value="1"/>
</dbReference>
<dbReference type="InterPro" id="IPR017945">
    <property type="entry name" value="DHBP_synth_RibB-like_a/b_dom"/>
</dbReference>
<dbReference type="InterPro" id="IPR006070">
    <property type="entry name" value="Sua5-like_dom"/>
</dbReference>
<dbReference type="InterPro" id="IPR023535">
    <property type="entry name" value="TC-AMP_synthase"/>
</dbReference>
<dbReference type="InterPro" id="IPR050156">
    <property type="entry name" value="TC-AMP_synthase_SUA5"/>
</dbReference>
<dbReference type="PANTHER" id="PTHR17490">
    <property type="entry name" value="SUA5"/>
    <property type="match status" value="1"/>
</dbReference>
<dbReference type="PANTHER" id="PTHR17490:SF18">
    <property type="entry name" value="THREONYLCARBAMOYL-AMP SYNTHASE"/>
    <property type="match status" value="1"/>
</dbReference>
<dbReference type="Pfam" id="PF01300">
    <property type="entry name" value="Sua5_yciO_yrdC"/>
    <property type="match status" value="1"/>
</dbReference>
<dbReference type="SUPFAM" id="SSF55821">
    <property type="entry name" value="YrdC/RibB"/>
    <property type="match status" value="1"/>
</dbReference>
<dbReference type="PROSITE" id="PS51163">
    <property type="entry name" value="YRDC"/>
    <property type="match status" value="1"/>
</dbReference>
<gene>
    <name evidence="1" type="primary">tsaC</name>
    <name type="synonym">rimN</name>
    <name type="ordered locus">APP7_1198</name>
</gene>
<protein>
    <recommendedName>
        <fullName evidence="1">Threonylcarbamoyl-AMP synthase</fullName>
        <shortName evidence="1">TC-AMP synthase</shortName>
        <ecNumber evidence="1">2.7.7.87</ecNumber>
    </recommendedName>
    <alternativeName>
        <fullName evidence="1">L-threonylcarbamoyladenylate synthase</fullName>
    </alternativeName>
    <alternativeName>
        <fullName evidence="1">t(6)A37 threonylcarbamoyladenosine biosynthesis protein TsaC</fullName>
    </alternativeName>
    <alternativeName>
        <fullName evidence="1">tRNA threonylcarbamoyladenosine biosynthesis protein TsaC</fullName>
    </alternativeName>
</protein>